<protein>
    <recommendedName>
        <fullName evidence="3">NADPH-dependent 3-dehydrocapnine reductase</fullName>
        <ecNumber evidence="2">1.1.1.-</ecNumber>
    </recommendedName>
</protein>
<accession>A0A3R5XUE6</accession>
<feature type="chain" id="PRO_0000462147" description="NADPH-dependent 3-dehydrocapnine reductase">
    <location>
        <begin position="1"/>
        <end position="283"/>
    </location>
</feature>
<feature type="active site" description="Proton acceptor" evidence="1">
    <location>
        <position position="153"/>
    </location>
</feature>
<organism>
    <name type="scientific">Ornithobacterium rhinotracheale</name>
    <dbReference type="NCBI Taxonomy" id="28251"/>
    <lineage>
        <taxon>Bacteria</taxon>
        <taxon>Pseudomonadati</taxon>
        <taxon>Bacteroidota</taxon>
        <taxon>Flavobacteriia</taxon>
        <taxon>Flavobacteriales</taxon>
        <taxon>Weeksellaceae</taxon>
        <taxon>Ornithobacterium</taxon>
    </lineage>
</organism>
<keyword id="KW-0444">Lipid biosynthesis</keyword>
<keyword id="KW-0443">Lipid metabolism</keyword>
<keyword id="KW-0521">NADP</keyword>
<keyword id="KW-0560">Oxidoreductase</keyword>
<proteinExistence type="evidence at protein level"/>
<gene>
    <name evidence="3" type="primary">capC</name>
    <name evidence="6" type="ORF">EQP59_04780</name>
</gene>
<name>CAPC_ORNRH</name>
<comment type="function">
    <text evidence="2">Reductase involved in the biosynthesis of capnine, a sulfonolipid present in the outer membrane of gliding Bacteroidetes and essential for gliding motility (PubMed:35414181). Catalyzes the reduction of 3-dehydrocapnine to capnine (PubMed:35414181).</text>
</comment>
<comment type="catalytic activity">
    <reaction evidence="2">
        <text>3-oxocapnine + NADPH + H(+) = capnine + NADP(+)</text>
        <dbReference type="Rhea" id="RHEA:81575"/>
        <dbReference type="ChEBI" id="CHEBI:15378"/>
        <dbReference type="ChEBI" id="CHEBI:57783"/>
        <dbReference type="ChEBI" id="CHEBI:58349"/>
        <dbReference type="ChEBI" id="CHEBI:231947"/>
        <dbReference type="ChEBI" id="CHEBI:231953"/>
    </reaction>
    <physiologicalReaction direction="left-to-right" evidence="2">
        <dbReference type="Rhea" id="RHEA:81576"/>
    </physiologicalReaction>
</comment>
<comment type="pathway">
    <text evidence="5">Lipid metabolism.</text>
</comment>
<comment type="similarity">
    <text evidence="4">Belongs to the short-chain dehydrogenases/reductases (SDR) family.</text>
</comment>
<reference evidence="6" key="1">
    <citation type="submission" date="2019-01" db="EMBL/GenBank/DDBJ databases">
        <title>Whole Genome of Ornithobacterium rhinotracheale FARPER-174b.</title>
        <authorList>
            <person name="Tataje-Lavanda L.A."/>
            <person name="Montalvan A."/>
            <person name="Montesinos R."/>
            <person name="Zimic M."/>
            <person name="Fernandez-Sanchez M."/>
            <person name="Fernandez-Diaz M."/>
        </authorList>
    </citation>
    <scope>NUCLEOTIDE SEQUENCE [LARGE SCALE GENOMIC DNA]</scope>
    <source>
        <strain>FARPER-174b</strain>
    </source>
</reference>
<reference key="2">
    <citation type="journal article" date="2022" name="Biochemistry">
        <title>Identification and Characterization of the Biosynthetic Pathway of the Sulfonolipid Capnine.</title>
        <authorList>
            <person name="Liu Y."/>
            <person name="Wei Y."/>
            <person name="Teh T.M."/>
            <person name="Liu D."/>
            <person name="Zhou Y."/>
            <person name="Zhao S."/>
            <person name="Ang E.L."/>
            <person name="Zhao H."/>
            <person name="Zhang Y."/>
        </authorList>
    </citation>
    <scope>FUNCTION</scope>
    <scope>CATALYTIC ACTIVITY</scope>
</reference>
<evidence type="ECO:0000250" key="1">
    <source>
        <dbReference type="UniProtKB" id="Q9BPW9"/>
    </source>
</evidence>
<evidence type="ECO:0000269" key="2">
    <source>
    </source>
</evidence>
<evidence type="ECO:0000303" key="3">
    <source>
    </source>
</evidence>
<evidence type="ECO:0000305" key="4"/>
<evidence type="ECO:0000305" key="5">
    <source>
    </source>
</evidence>
<evidence type="ECO:0000312" key="6">
    <source>
        <dbReference type="EMBL" id="QAR30703.1"/>
    </source>
</evidence>
<sequence length="283" mass="31623">MRYAVVTGVSSGIGKAICEKFLAKGLYVFGSVRKKEDAKYFEEKYPNTFHTLVFDTTDYPAVDKAVEEIHKVVGKKGLSVLVNNAGVAKYGPIQHVPIEELRQQYEVNVFASVYLTQKLLWLLGASKEAKWQGKVIQISSTAGVMTRPMLGPYSSSKHAVEAIYDALRRELMIYGVEVVLIEPGPIKTEIWGKAKSGGNPYKDTDYGEIFAQLDKAVDEIEKIGLPVEAVAGKAWEAFVAKKPKARYVVAPKKLMFKAAMYLIPDRMLDKIFYKDLKKLTQES</sequence>
<dbReference type="EC" id="1.1.1.-" evidence="2"/>
<dbReference type="EMBL" id="CP035107">
    <property type="protein sequence ID" value="QAR30703.1"/>
    <property type="molecule type" value="Genomic_DNA"/>
</dbReference>
<dbReference type="RefSeq" id="WP_128501181.1">
    <property type="nucleotide sequence ID" value="NZ_CP035107.1"/>
</dbReference>
<dbReference type="OrthoDB" id="1235794at2"/>
<dbReference type="Proteomes" id="UP000287701">
    <property type="component" value="Chromosome"/>
</dbReference>
<dbReference type="GO" id="GO:0016491">
    <property type="term" value="F:oxidoreductase activity"/>
    <property type="evidence" value="ECO:0007669"/>
    <property type="project" value="UniProtKB-KW"/>
</dbReference>
<dbReference type="Gene3D" id="3.40.50.720">
    <property type="entry name" value="NAD(P)-binding Rossmann-like Domain"/>
    <property type="match status" value="1"/>
</dbReference>
<dbReference type="InterPro" id="IPR036291">
    <property type="entry name" value="NAD(P)-bd_dom_sf"/>
</dbReference>
<dbReference type="InterPro" id="IPR020904">
    <property type="entry name" value="Sc_DH/Rdtase_CS"/>
</dbReference>
<dbReference type="InterPro" id="IPR002347">
    <property type="entry name" value="SDR_fam"/>
</dbReference>
<dbReference type="PANTHER" id="PTHR44169">
    <property type="entry name" value="NADPH-DEPENDENT 1-ACYLDIHYDROXYACETONE PHOSPHATE REDUCTASE"/>
    <property type="match status" value="1"/>
</dbReference>
<dbReference type="PANTHER" id="PTHR44169:SF6">
    <property type="entry name" value="NADPH-DEPENDENT 1-ACYLDIHYDROXYACETONE PHOSPHATE REDUCTASE"/>
    <property type="match status" value="1"/>
</dbReference>
<dbReference type="Pfam" id="PF00106">
    <property type="entry name" value="adh_short"/>
    <property type="match status" value="1"/>
</dbReference>
<dbReference type="PRINTS" id="PR00081">
    <property type="entry name" value="GDHRDH"/>
</dbReference>
<dbReference type="PRINTS" id="PR00080">
    <property type="entry name" value="SDRFAMILY"/>
</dbReference>
<dbReference type="SUPFAM" id="SSF51735">
    <property type="entry name" value="NAD(P)-binding Rossmann-fold domains"/>
    <property type="match status" value="1"/>
</dbReference>
<dbReference type="PROSITE" id="PS00061">
    <property type="entry name" value="ADH_SHORT"/>
    <property type="match status" value="1"/>
</dbReference>